<keyword id="KW-0150">Chloroplast</keyword>
<keyword id="KW-0240">DNA-directed RNA polymerase</keyword>
<keyword id="KW-0548">Nucleotidyltransferase</keyword>
<keyword id="KW-0934">Plastid</keyword>
<keyword id="KW-0804">Transcription</keyword>
<keyword id="KW-0808">Transferase</keyword>
<sequence length="339" mass="38869">MVREEVAGSTQTLQWKCVESRVDSKRLYYGRFILSPLRKGQADTVGIALRRALLGEIEGTCITRAKFGSVPHEYSTIAGIEESVQEILLNLKEIVLRSNLYGVRDASICVKGPRYITAQDIILPPSVEIVDTAQPIANLTEPIDFCIDLQIKRDRGYQTELRKNYQDGSYPIDAVSMPVRNVNYSIFSCGNGNEKHEILFLEIWTNGSLTPKEALYEASRNLIDLFLPFLHAEEEGASFEENKNRFTPPLFTFQKRLTNLKKNKKGIPLNCIFIDQLELTSRTYNCLKRANIHTLLDLLSKTEEDLLRIDSFRMEDRKHIWDTLEKHLPIDLLKNKLSF</sequence>
<feature type="chain" id="PRO_0000175499" description="DNA-directed RNA polymerase subunit alpha">
    <location>
        <begin position="1"/>
        <end position="339"/>
    </location>
</feature>
<feature type="region of interest" description="Alpha N-terminal domain (alpha-NTD)" evidence="1">
    <location>
        <begin position="1"/>
        <end position="233"/>
    </location>
</feature>
<feature type="region of interest" description="Alpha C-terminal domain (alpha-CTD)" evidence="1">
    <location>
        <begin position="266"/>
        <end position="339"/>
    </location>
</feature>
<proteinExistence type="inferred from homology"/>
<gene>
    <name evidence="1" type="primary">rpoA</name>
</gene>
<evidence type="ECO:0000255" key="1">
    <source>
        <dbReference type="HAMAP-Rule" id="MF_00059"/>
    </source>
</evidence>
<protein>
    <recommendedName>
        <fullName evidence="1">DNA-directed RNA polymerase subunit alpha</fullName>
        <shortName evidence="1">PEP</shortName>
        <ecNumber evidence="1">2.7.7.6</ecNumber>
    </recommendedName>
    <alternativeName>
        <fullName evidence="1">Plastid-encoded RNA polymerase subunit alpha</fullName>
        <shortName evidence="1">RNA polymerase subunit alpha</shortName>
    </alternativeName>
</protein>
<reference key="1">
    <citation type="journal article" date="1997" name="Mol. Phylogenet. Evol.">
        <title>Phylogenetic analysis of the Triticeae (Poaceae) based on rpoA sequence data.</title>
        <authorList>
            <person name="Petersen G."/>
            <person name="Seberg O."/>
        </authorList>
    </citation>
    <scope>NUCLEOTIDE SEQUENCE [GENOMIC DNA]</scope>
    <source>
        <tissue>Leaf</tissue>
    </source>
</reference>
<reference key="2">
    <citation type="journal article" date="2002" name="Genome">
        <title>Phylogenetic analysis of North American Elymus and the monogenomic Triticeae (Poaceae) using three chloroplast DNA data sets.</title>
        <authorList>
            <person name="Mason-Gamer R.J."/>
            <person name="Orme N.L."/>
            <person name="Anderson C.M."/>
        </authorList>
    </citation>
    <scope>NUCLEOTIDE SEQUENCE [GENOMIC DNA]</scope>
</reference>
<comment type="function">
    <text evidence="1">DNA-dependent RNA polymerase catalyzes the transcription of DNA into RNA using the four ribonucleoside triphosphates as substrates.</text>
</comment>
<comment type="catalytic activity">
    <reaction evidence="1">
        <text>RNA(n) + a ribonucleoside 5'-triphosphate = RNA(n+1) + diphosphate</text>
        <dbReference type="Rhea" id="RHEA:21248"/>
        <dbReference type="Rhea" id="RHEA-COMP:14527"/>
        <dbReference type="Rhea" id="RHEA-COMP:17342"/>
        <dbReference type="ChEBI" id="CHEBI:33019"/>
        <dbReference type="ChEBI" id="CHEBI:61557"/>
        <dbReference type="ChEBI" id="CHEBI:140395"/>
        <dbReference type="EC" id="2.7.7.6"/>
    </reaction>
</comment>
<comment type="subunit">
    <text evidence="1">In plastids the minimal PEP RNA polymerase catalytic core is composed of four subunits: alpha, beta, beta', and beta''. When a (nuclear-encoded) sigma factor is associated with the core the holoenzyme is formed, which can initiate transcription.</text>
</comment>
<comment type="subcellular location">
    <subcellularLocation>
        <location>Plastid</location>
        <location>Chloroplast</location>
    </subcellularLocation>
</comment>
<comment type="domain">
    <text evidence="1">The N-terminal domain is essential for RNAP assembly and basal transcription, whereas the C-terminal domain is involved in interaction with transcriptional regulators and with upstream promoter elements.</text>
</comment>
<comment type="similarity">
    <text evidence="1">Belongs to the RNA polymerase alpha chain family.</text>
</comment>
<organism>
    <name type="scientific">Taeniatherum caput-medusae</name>
    <name type="common">Medusahead</name>
    <name type="synonym">Elymus caput-medusae</name>
    <dbReference type="NCBI Taxonomy" id="37687"/>
    <lineage>
        <taxon>Eukaryota</taxon>
        <taxon>Viridiplantae</taxon>
        <taxon>Streptophyta</taxon>
        <taxon>Embryophyta</taxon>
        <taxon>Tracheophyta</taxon>
        <taxon>Spermatophyta</taxon>
        <taxon>Magnoliopsida</taxon>
        <taxon>Liliopsida</taxon>
        <taxon>Poales</taxon>
        <taxon>Poaceae</taxon>
        <taxon>BOP clade</taxon>
        <taxon>Pooideae</taxon>
        <taxon>Triticodae</taxon>
        <taxon>Triticeae</taxon>
        <taxon>Hordeinae</taxon>
        <taxon>Taeniatherum</taxon>
    </lineage>
</organism>
<geneLocation type="chloroplast"/>
<accession>Q7GED0</accession>
<name>RPOA_TAECM</name>
<dbReference type="EC" id="2.7.7.6" evidence="1"/>
<dbReference type="EMBL" id="Z77760">
    <property type="protein sequence ID" value="CAB01357.1"/>
    <property type="molecule type" value="Genomic_DNA"/>
</dbReference>
<dbReference type="EMBL" id="AY115963">
    <property type="protein sequence ID" value="AAM97472.1"/>
    <property type="molecule type" value="Genomic_DNA"/>
</dbReference>
<dbReference type="RefSeq" id="YP_009467714.1">
    <property type="nucleotide sequence ID" value="NC_037160.1"/>
</dbReference>
<dbReference type="SMR" id="Q7GED0"/>
<dbReference type="GeneID" id="36273556"/>
<dbReference type="GO" id="GO:0009507">
    <property type="term" value="C:chloroplast"/>
    <property type="evidence" value="ECO:0007669"/>
    <property type="project" value="UniProtKB-SubCell"/>
</dbReference>
<dbReference type="GO" id="GO:0000428">
    <property type="term" value="C:DNA-directed RNA polymerase complex"/>
    <property type="evidence" value="ECO:0007669"/>
    <property type="project" value="UniProtKB-KW"/>
</dbReference>
<dbReference type="GO" id="GO:0005739">
    <property type="term" value="C:mitochondrion"/>
    <property type="evidence" value="ECO:0007669"/>
    <property type="project" value="GOC"/>
</dbReference>
<dbReference type="GO" id="GO:0003677">
    <property type="term" value="F:DNA binding"/>
    <property type="evidence" value="ECO:0007669"/>
    <property type="project" value="UniProtKB-UniRule"/>
</dbReference>
<dbReference type="GO" id="GO:0003899">
    <property type="term" value="F:DNA-directed RNA polymerase activity"/>
    <property type="evidence" value="ECO:0007669"/>
    <property type="project" value="UniProtKB-UniRule"/>
</dbReference>
<dbReference type="GO" id="GO:0046983">
    <property type="term" value="F:protein dimerization activity"/>
    <property type="evidence" value="ECO:0007669"/>
    <property type="project" value="InterPro"/>
</dbReference>
<dbReference type="GO" id="GO:0006351">
    <property type="term" value="P:DNA-templated transcription"/>
    <property type="evidence" value="ECO:0007669"/>
    <property type="project" value="UniProtKB-UniRule"/>
</dbReference>
<dbReference type="CDD" id="cd06928">
    <property type="entry name" value="RNAP_alpha_NTD"/>
    <property type="match status" value="1"/>
</dbReference>
<dbReference type="FunFam" id="2.170.120.12:FF:000001">
    <property type="entry name" value="DNA-directed RNA polymerase subunit alpha"/>
    <property type="match status" value="1"/>
</dbReference>
<dbReference type="Gene3D" id="1.10.150.20">
    <property type="entry name" value="5' to 3' exonuclease, C-terminal subdomain"/>
    <property type="match status" value="1"/>
</dbReference>
<dbReference type="Gene3D" id="2.170.120.12">
    <property type="entry name" value="DNA-directed RNA polymerase, insert domain"/>
    <property type="match status" value="1"/>
</dbReference>
<dbReference type="Gene3D" id="3.30.1360.10">
    <property type="entry name" value="RNA polymerase, RBP11-like subunit"/>
    <property type="match status" value="1"/>
</dbReference>
<dbReference type="HAMAP" id="MF_00059">
    <property type="entry name" value="RNApol_bact_RpoA"/>
    <property type="match status" value="1"/>
</dbReference>
<dbReference type="InterPro" id="IPR011262">
    <property type="entry name" value="DNA-dir_RNA_pol_insert"/>
</dbReference>
<dbReference type="InterPro" id="IPR011263">
    <property type="entry name" value="DNA-dir_RNA_pol_RpoA/D/Rpb3"/>
</dbReference>
<dbReference type="InterPro" id="IPR011773">
    <property type="entry name" value="DNA-dir_RpoA"/>
</dbReference>
<dbReference type="InterPro" id="IPR036603">
    <property type="entry name" value="RBP11-like"/>
</dbReference>
<dbReference type="InterPro" id="IPR011260">
    <property type="entry name" value="RNAP_asu_C"/>
</dbReference>
<dbReference type="InterPro" id="IPR036643">
    <property type="entry name" value="RNApol_insert_sf"/>
</dbReference>
<dbReference type="NCBIfam" id="TIGR02027">
    <property type="entry name" value="rpoA"/>
    <property type="match status" value="1"/>
</dbReference>
<dbReference type="Pfam" id="PF01000">
    <property type="entry name" value="RNA_pol_A_bac"/>
    <property type="match status" value="1"/>
</dbReference>
<dbReference type="Pfam" id="PF03118">
    <property type="entry name" value="RNA_pol_A_CTD"/>
    <property type="match status" value="1"/>
</dbReference>
<dbReference type="Pfam" id="PF01193">
    <property type="entry name" value="RNA_pol_L"/>
    <property type="match status" value="1"/>
</dbReference>
<dbReference type="SMART" id="SM00662">
    <property type="entry name" value="RPOLD"/>
    <property type="match status" value="1"/>
</dbReference>
<dbReference type="SUPFAM" id="SSF47789">
    <property type="entry name" value="C-terminal domain of RNA polymerase alpha subunit"/>
    <property type="match status" value="1"/>
</dbReference>
<dbReference type="SUPFAM" id="SSF56553">
    <property type="entry name" value="Insert subdomain of RNA polymerase alpha subunit"/>
    <property type="match status" value="1"/>
</dbReference>
<dbReference type="SUPFAM" id="SSF55257">
    <property type="entry name" value="RBP11-like subunits of RNA polymerase"/>
    <property type="match status" value="1"/>
</dbReference>